<dbReference type="EC" id="2.1.1.222" evidence="1"/>
<dbReference type="EC" id="2.1.1.64" evidence="1"/>
<dbReference type="EMBL" id="CP000901">
    <property type="protein sequence ID" value="ABX88020.1"/>
    <property type="molecule type" value="Genomic_DNA"/>
</dbReference>
<dbReference type="RefSeq" id="WP_002210820.1">
    <property type="nucleotide sequence ID" value="NZ_CP009935.1"/>
</dbReference>
<dbReference type="SMR" id="A9R284"/>
<dbReference type="GeneID" id="57977354"/>
<dbReference type="KEGG" id="ypg:YpAngola_A1311"/>
<dbReference type="PATRIC" id="fig|349746.12.peg.2277"/>
<dbReference type="UniPathway" id="UPA00232"/>
<dbReference type="GO" id="GO:0102208">
    <property type="term" value="F:2-polyprenyl-6-hydroxyphenol methylase activity"/>
    <property type="evidence" value="ECO:0007669"/>
    <property type="project" value="UniProtKB-EC"/>
</dbReference>
<dbReference type="GO" id="GO:0061542">
    <property type="term" value="F:3-demethylubiquinol 3-O-methyltransferase activity"/>
    <property type="evidence" value="ECO:0007669"/>
    <property type="project" value="UniProtKB-UniRule"/>
</dbReference>
<dbReference type="GO" id="GO:0010420">
    <property type="term" value="F:polyprenyldihydroxybenzoate methyltransferase activity"/>
    <property type="evidence" value="ECO:0007669"/>
    <property type="project" value="InterPro"/>
</dbReference>
<dbReference type="GO" id="GO:0032259">
    <property type="term" value="P:methylation"/>
    <property type="evidence" value="ECO:0007669"/>
    <property type="project" value="UniProtKB-KW"/>
</dbReference>
<dbReference type="CDD" id="cd02440">
    <property type="entry name" value="AdoMet_MTases"/>
    <property type="match status" value="1"/>
</dbReference>
<dbReference type="FunFam" id="3.40.50.150:FF:000028">
    <property type="entry name" value="Ubiquinone biosynthesis O-methyltransferase"/>
    <property type="match status" value="1"/>
</dbReference>
<dbReference type="Gene3D" id="3.40.50.150">
    <property type="entry name" value="Vaccinia Virus protein VP39"/>
    <property type="match status" value="1"/>
</dbReference>
<dbReference type="HAMAP" id="MF_00472">
    <property type="entry name" value="UbiG"/>
    <property type="match status" value="1"/>
</dbReference>
<dbReference type="InterPro" id="IPR029063">
    <property type="entry name" value="SAM-dependent_MTases_sf"/>
</dbReference>
<dbReference type="InterPro" id="IPR010233">
    <property type="entry name" value="UbiG_MeTrfase"/>
</dbReference>
<dbReference type="NCBIfam" id="TIGR01983">
    <property type="entry name" value="UbiG"/>
    <property type="match status" value="1"/>
</dbReference>
<dbReference type="PANTHER" id="PTHR43464">
    <property type="entry name" value="METHYLTRANSFERASE"/>
    <property type="match status" value="1"/>
</dbReference>
<dbReference type="PANTHER" id="PTHR43464:SF19">
    <property type="entry name" value="UBIQUINONE BIOSYNTHESIS O-METHYLTRANSFERASE, MITOCHONDRIAL"/>
    <property type="match status" value="1"/>
</dbReference>
<dbReference type="Pfam" id="PF13489">
    <property type="entry name" value="Methyltransf_23"/>
    <property type="match status" value="1"/>
</dbReference>
<dbReference type="SUPFAM" id="SSF53335">
    <property type="entry name" value="S-adenosyl-L-methionine-dependent methyltransferases"/>
    <property type="match status" value="1"/>
</dbReference>
<protein>
    <recommendedName>
        <fullName evidence="1">Ubiquinone biosynthesis O-methyltransferase</fullName>
    </recommendedName>
    <alternativeName>
        <fullName evidence="1">2-polyprenyl-6-hydroxyphenol methylase</fullName>
        <ecNumber evidence="1">2.1.1.222</ecNumber>
    </alternativeName>
    <alternativeName>
        <fullName evidence="1">3-demethylubiquinone 3-O-methyltransferase</fullName>
        <ecNumber evidence="1">2.1.1.64</ecNumber>
    </alternativeName>
</protein>
<keyword id="KW-0489">Methyltransferase</keyword>
<keyword id="KW-0949">S-adenosyl-L-methionine</keyword>
<keyword id="KW-0808">Transferase</keyword>
<keyword id="KW-0831">Ubiquinone biosynthesis</keyword>
<proteinExistence type="inferred from homology"/>
<organism>
    <name type="scientific">Yersinia pestis bv. Antiqua (strain Angola)</name>
    <dbReference type="NCBI Taxonomy" id="349746"/>
    <lineage>
        <taxon>Bacteria</taxon>
        <taxon>Pseudomonadati</taxon>
        <taxon>Pseudomonadota</taxon>
        <taxon>Gammaproteobacteria</taxon>
        <taxon>Enterobacterales</taxon>
        <taxon>Yersiniaceae</taxon>
        <taxon>Yersinia</taxon>
    </lineage>
</organism>
<reference key="1">
    <citation type="journal article" date="2010" name="J. Bacteriol.">
        <title>Genome sequence of the deep-rooted Yersinia pestis strain Angola reveals new insights into the evolution and pangenome of the plague bacterium.</title>
        <authorList>
            <person name="Eppinger M."/>
            <person name="Worsham P.L."/>
            <person name="Nikolich M.P."/>
            <person name="Riley D.R."/>
            <person name="Sebastian Y."/>
            <person name="Mou S."/>
            <person name="Achtman M."/>
            <person name="Lindler L.E."/>
            <person name="Ravel J."/>
        </authorList>
    </citation>
    <scope>NUCLEOTIDE SEQUENCE [LARGE SCALE GENOMIC DNA]</scope>
    <source>
        <strain>Angola</strain>
    </source>
</reference>
<accession>A9R284</accession>
<sequence>MRAKTTSRHHNVDEQEIAKFEAVASRWWDLEGEFKPLHRINPLRLNYILQRSGGIFEKKVLDVGCGGGILAESMAREGAQVTGLDMGYEPLQVARLHALETGVKLEYVQETVENHAQQHPQHYDVVTCMEMLEHVPDPASVVRACAQLVKPGGHVFFSTINRNTKSWLMAVVGAEYLLKMVPKGTHDAKKFIRPSELIGWVDQTPLLERHIIGLHYNPITDHFKLGRNVDVNYMVHTQRDSE</sequence>
<name>UBIG_YERPG</name>
<feature type="chain" id="PRO_1000199709" description="Ubiquinone biosynthesis O-methyltransferase">
    <location>
        <begin position="1"/>
        <end position="242"/>
    </location>
</feature>
<feature type="binding site" evidence="1">
    <location>
        <position position="44"/>
    </location>
    <ligand>
        <name>S-adenosyl-L-methionine</name>
        <dbReference type="ChEBI" id="CHEBI:59789"/>
    </ligand>
</feature>
<feature type="binding site" evidence="1">
    <location>
        <position position="64"/>
    </location>
    <ligand>
        <name>S-adenosyl-L-methionine</name>
        <dbReference type="ChEBI" id="CHEBI:59789"/>
    </ligand>
</feature>
<feature type="binding site" evidence="1">
    <location>
        <position position="85"/>
    </location>
    <ligand>
        <name>S-adenosyl-L-methionine</name>
        <dbReference type="ChEBI" id="CHEBI:59789"/>
    </ligand>
</feature>
<feature type="binding site" evidence="1">
    <location>
        <position position="129"/>
    </location>
    <ligand>
        <name>S-adenosyl-L-methionine</name>
        <dbReference type="ChEBI" id="CHEBI:59789"/>
    </ligand>
</feature>
<comment type="function">
    <text evidence="1">O-methyltransferase that catalyzes the 2 O-methylation steps in the ubiquinone biosynthetic pathway.</text>
</comment>
<comment type="catalytic activity">
    <reaction evidence="1">
        <text>a 3-demethylubiquinol + S-adenosyl-L-methionine = a ubiquinol + S-adenosyl-L-homocysteine + H(+)</text>
        <dbReference type="Rhea" id="RHEA:44380"/>
        <dbReference type="Rhea" id="RHEA-COMP:9566"/>
        <dbReference type="Rhea" id="RHEA-COMP:10914"/>
        <dbReference type="ChEBI" id="CHEBI:15378"/>
        <dbReference type="ChEBI" id="CHEBI:17976"/>
        <dbReference type="ChEBI" id="CHEBI:57856"/>
        <dbReference type="ChEBI" id="CHEBI:59789"/>
        <dbReference type="ChEBI" id="CHEBI:84422"/>
        <dbReference type="EC" id="2.1.1.64"/>
    </reaction>
</comment>
<comment type="catalytic activity">
    <reaction evidence="1">
        <text>a 3-(all-trans-polyprenyl)benzene-1,2-diol + S-adenosyl-L-methionine = a 2-methoxy-6-(all-trans-polyprenyl)phenol + S-adenosyl-L-homocysteine + H(+)</text>
        <dbReference type="Rhea" id="RHEA:31411"/>
        <dbReference type="Rhea" id="RHEA-COMP:9550"/>
        <dbReference type="Rhea" id="RHEA-COMP:9551"/>
        <dbReference type="ChEBI" id="CHEBI:15378"/>
        <dbReference type="ChEBI" id="CHEBI:57856"/>
        <dbReference type="ChEBI" id="CHEBI:59789"/>
        <dbReference type="ChEBI" id="CHEBI:62729"/>
        <dbReference type="ChEBI" id="CHEBI:62731"/>
        <dbReference type="EC" id="2.1.1.222"/>
    </reaction>
</comment>
<comment type="pathway">
    <text evidence="1">Cofactor biosynthesis; ubiquinone biosynthesis.</text>
</comment>
<comment type="similarity">
    <text evidence="1">Belongs to the methyltransferase superfamily. UbiG/COQ3 family.</text>
</comment>
<evidence type="ECO:0000255" key="1">
    <source>
        <dbReference type="HAMAP-Rule" id="MF_00472"/>
    </source>
</evidence>
<gene>
    <name evidence="1" type="primary">ubiG</name>
    <name type="ordered locus">YpAngola_A1311</name>
</gene>